<sequence>MNQHSHKDYETVRIAVVRARWHADIVDQCVSAFEAEMADIGGDRFAVDVFDVPGAYEIPLHARTLAETGRYGAVLGTAFVVNGGIYRHEFVASAVIDGMMNVQLSTGVPVLSAVLTPHNYHDSAEHHRFFFEHFTVKGKEAARACVEILAAREKIAA</sequence>
<accession>Q986N2</accession>
<comment type="function">
    <text evidence="3">Catalyzes the formation of 6,7-dimethyl-8-ribityllumazine by condensation of 5-amino-6-(D-ribitylamino)uracil with 3,4-dihydroxy-2-butanone 4-phosphate. This is the penultimate step in the biosynthesis of riboflavin.</text>
</comment>
<comment type="catalytic activity">
    <reaction evidence="3">
        <text>(2S)-2-hydroxy-3-oxobutyl phosphate + 5-amino-6-(D-ribitylamino)uracil = 6,7-dimethyl-8-(1-D-ribityl)lumazine + phosphate + 2 H2O + H(+)</text>
        <dbReference type="Rhea" id="RHEA:26152"/>
        <dbReference type="ChEBI" id="CHEBI:15377"/>
        <dbReference type="ChEBI" id="CHEBI:15378"/>
        <dbReference type="ChEBI" id="CHEBI:15934"/>
        <dbReference type="ChEBI" id="CHEBI:43474"/>
        <dbReference type="ChEBI" id="CHEBI:58201"/>
        <dbReference type="ChEBI" id="CHEBI:58830"/>
        <dbReference type="EC" id="2.5.1.78"/>
    </reaction>
</comment>
<comment type="biophysicochemical properties">
    <kinetics>
        <KM evidence="3">20 uM for 5-amino-6-(D-ribitylamino)uracil (at 37 degrees Celsius and pH 7.0)</KM>
        <KM evidence="3">450 uM for 3,4-dihydroxy-2-butanone 4-phosphate (at 37 degrees Celsius and pH 7.0)</KM>
        <text>kcat is inferior to 0.0003 sec(-1) (at 37 degrees Celsius and pH 7.0).</text>
    </kinetics>
</comment>
<comment type="pathway">
    <text>Cofactor biosynthesis; riboflavin biosynthesis; riboflavin from 2-hydroxy-3-oxobutyl phosphate and 5-amino-6-(D-ribitylamino)uracil: step 1/2.</text>
</comment>
<comment type="subunit">
    <text evidence="3">Homodecamer, arranged as a dimer of pentamers.</text>
</comment>
<comment type="similarity">
    <text evidence="4">Belongs to the DMRL synthase family.</text>
</comment>
<evidence type="ECO:0000250" key="1"/>
<evidence type="ECO:0000255" key="2"/>
<evidence type="ECO:0000269" key="3">
    <source>
    </source>
</evidence>
<evidence type="ECO:0000305" key="4"/>
<evidence type="ECO:0007829" key="5">
    <source>
        <dbReference type="PDB" id="2OBX"/>
    </source>
</evidence>
<proteinExistence type="evidence at protein level"/>
<organism>
    <name type="scientific">Mesorhizobium japonicum (strain LMG 29417 / CECT 9101 / MAFF 303099)</name>
    <name type="common">Mesorhizobium loti (strain MAFF 303099)</name>
    <dbReference type="NCBI Taxonomy" id="266835"/>
    <lineage>
        <taxon>Bacteria</taxon>
        <taxon>Pseudomonadati</taxon>
        <taxon>Pseudomonadota</taxon>
        <taxon>Alphaproteobacteria</taxon>
        <taxon>Hyphomicrobiales</taxon>
        <taxon>Phyllobacteriaceae</taxon>
        <taxon>Mesorhizobium</taxon>
    </lineage>
</organism>
<name>RISB2_RHILO</name>
<dbReference type="EC" id="2.5.1.78"/>
<dbReference type="EMBL" id="BA000012">
    <property type="protein sequence ID" value="BAB53421.1"/>
    <property type="molecule type" value="Genomic_DNA"/>
</dbReference>
<dbReference type="RefSeq" id="WP_010914728.1">
    <property type="nucleotide sequence ID" value="NC_002678.2"/>
</dbReference>
<dbReference type="PDB" id="2OBX">
    <property type="method" value="X-ray"/>
    <property type="resolution" value="2.53 A"/>
    <property type="chains" value="A/B/C/D/E/F/G/H/I/J=1-157"/>
</dbReference>
<dbReference type="PDBsum" id="2OBX"/>
<dbReference type="SMR" id="Q986N2"/>
<dbReference type="KEGG" id="mlo:mll7281"/>
<dbReference type="PATRIC" id="fig|266835.9.peg.5816"/>
<dbReference type="eggNOG" id="COG0054">
    <property type="taxonomic scope" value="Bacteria"/>
</dbReference>
<dbReference type="HOGENOM" id="CLU_089358_0_0_5"/>
<dbReference type="BRENDA" id="2.5.1.78">
    <property type="organism ID" value="3243"/>
</dbReference>
<dbReference type="UniPathway" id="UPA00275">
    <property type="reaction ID" value="UER00404"/>
</dbReference>
<dbReference type="EvolutionaryTrace" id="Q986N2"/>
<dbReference type="Proteomes" id="UP000000552">
    <property type="component" value="Chromosome"/>
</dbReference>
<dbReference type="GO" id="GO:0005829">
    <property type="term" value="C:cytosol"/>
    <property type="evidence" value="ECO:0007669"/>
    <property type="project" value="TreeGrafter"/>
</dbReference>
<dbReference type="GO" id="GO:0009349">
    <property type="term" value="C:riboflavin synthase complex"/>
    <property type="evidence" value="ECO:0007669"/>
    <property type="project" value="InterPro"/>
</dbReference>
<dbReference type="GO" id="GO:0000906">
    <property type="term" value="F:6,7-dimethyl-8-ribityllumazine synthase activity"/>
    <property type="evidence" value="ECO:0007669"/>
    <property type="project" value="UniProtKB-UniRule"/>
</dbReference>
<dbReference type="GO" id="GO:0009231">
    <property type="term" value="P:riboflavin biosynthetic process"/>
    <property type="evidence" value="ECO:0007669"/>
    <property type="project" value="UniProtKB-UniRule"/>
</dbReference>
<dbReference type="CDD" id="cd09208">
    <property type="entry name" value="Lumazine_synthase-II"/>
    <property type="match status" value="1"/>
</dbReference>
<dbReference type="Gene3D" id="3.40.50.960">
    <property type="entry name" value="Lumazine/riboflavin synthase"/>
    <property type="match status" value="1"/>
</dbReference>
<dbReference type="HAMAP" id="MF_00178">
    <property type="entry name" value="Lumazine_synth"/>
    <property type="match status" value="1"/>
</dbReference>
<dbReference type="InterPro" id="IPR034964">
    <property type="entry name" value="LS"/>
</dbReference>
<dbReference type="InterPro" id="IPR002180">
    <property type="entry name" value="LS/RS"/>
</dbReference>
<dbReference type="InterPro" id="IPR036467">
    <property type="entry name" value="LS/RS_sf"/>
</dbReference>
<dbReference type="NCBIfam" id="NF009084">
    <property type="entry name" value="PRK12419.1"/>
    <property type="match status" value="1"/>
</dbReference>
<dbReference type="PANTHER" id="PTHR21058:SF0">
    <property type="entry name" value="6,7-DIMETHYL-8-RIBITYLLUMAZINE SYNTHASE"/>
    <property type="match status" value="1"/>
</dbReference>
<dbReference type="PANTHER" id="PTHR21058">
    <property type="entry name" value="6,7-DIMETHYL-8-RIBITYLLUMAZINE SYNTHASE DMRL SYNTHASE LUMAZINE SYNTHASE"/>
    <property type="match status" value="1"/>
</dbReference>
<dbReference type="Pfam" id="PF00885">
    <property type="entry name" value="DMRL_synthase"/>
    <property type="match status" value="1"/>
</dbReference>
<dbReference type="SUPFAM" id="SSF52121">
    <property type="entry name" value="Lumazine synthase"/>
    <property type="match status" value="1"/>
</dbReference>
<gene>
    <name type="primary">ribH2</name>
    <name type="ordered locus">mll7281</name>
</gene>
<feature type="chain" id="PRO_0000134792" description="6,7-dimethyl-8-ribityllumazine synthase 2">
    <location>
        <begin position="1"/>
        <end position="157"/>
    </location>
</feature>
<feature type="active site" description="Proton donor" evidence="2">
    <location>
        <position position="87"/>
    </location>
</feature>
<feature type="binding site">
    <location>
        <position position="21"/>
    </location>
    <ligand>
        <name>5-amino-6-(D-ribitylamino)uracil</name>
        <dbReference type="ChEBI" id="CHEBI:15934"/>
    </ligand>
</feature>
<feature type="binding site">
    <location>
        <begin position="55"/>
        <end position="57"/>
    </location>
    <ligand>
        <name>5-amino-6-(D-ribitylamino)uracil</name>
        <dbReference type="ChEBI" id="CHEBI:15934"/>
    </ligand>
</feature>
<feature type="binding site">
    <location>
        <begin position="79"/>
        <end position="81"/>
    </location>
    <ligand>
        <name>5-amino-6-(D-ribitylamino)uracil</name>
        <dbReference type="ChEBI" id="CHEBI:15934"/>
    </ligand>
</feature>
<feature type="binding site">
    <location>
        <position position="112"/>
    </location>
    <ligand>
        <name>5-amino-6-(D-ribitylamino)uracil</name>
        <dbReference type="ChEBI" id="CHEBI:15934"/>
    </ligand>
</feature>
<feature type="binding site" evidence="1">
    <location>
        <position position="126"/>
    </location>
    <ligand>
        <name>(2S)-2-hydroxy-3-oxobutyl phosphate</name>
        <dbReference type="ChEBI" id="CHEBI:58830"/>
    </ligand>
</feature>
<feature type="strand" evidence="5">
    <location>
        <begin position="12"/>
        <end position="19"/>
    </location>
</feature>
<feature type="helix" evidence="5">
    <location>
        <begin position="23"/>
        <end position="41"/>
    </location>
</feature>
<feature type="strand" evidence="5">
    <location>
        <begin position="44"/>
        <end position="54"/>
    </location>
</feature>
<feature type="helix" evidence="5">
    <location>
        <begin position="55"/>
        <end position="57"/>
    </location>
</feature>
<feature type="helix" evidence="5">
    <location>
        <begin position="58"/>
        <end position="68"/>
    </location>
</feature>
<feature type="strand" evidence="5">
    <location>
        <begin position="72"/>
        <end position="79"/>
    </location>
</feature>
<feature type="strand" evidence="5">
    <location>
        <begin position="84"/>
        <end position="86"/>
    </location>
</feature>
<feature type="helix" evidence="5">
    <location>
        <begin position="89"/>
        <end position="106"/>
    </location>
</feature>
<feature type="strand" evidence="5">
    <location>
        <begin position="110"/>
        <end position="115"/>
    </location>
</feature>
<feature type="helix" evidence="5">
    <location>
        <begin position="124"/>
        <end position="154"/>
    </location>
</feature>
<protein>
    <recommendedName>
        <fullName>6,7-dimethyl-8-ribityllumazine synthase 2</fullName>
        <shortName>DMRL synthase 2</shortName>
        <shortName>LS 2</shortName>
        <shortName>Lumazine synthase 2</shortName>
        <ecNumber>2.5.1.78</ecNumber>
    </recommendedName>
    <alternativeName>
        <fullName>Type II lumazine synthase</fullName>
    </alternativeName>
</protein>
<reference key="1">
    <citation type="journal article" date="2000" name="DNA Res.">
        <title>Complete genome structure of the nitrogen-fixing symbiotic bacterium Mesorhizobium loti.</title>
        <authorList>
            <person name="Kaneko T."/>
            <person name="Nakamura Y."/>
            <person name="Sato S."/>
            <person name="Asamizu E."/>
            <person name="Kato T."/>
            <person name="Sasamoto S."/>
            <person name="Watanabe A."/>
            <person name="Idesawa K."/>
            <person name="Ishikawa A."/>
            <person name="Kawashima K."/>
            <person name="Kimura T."/>
            <person name="Kishida Y."/>
            <person name="Kiyokawa C."/>
            <person name="Kohara M."/>
            <person name="Matsumoto M."/>
            <person name="Matsuno A."/>
            <person name="Mochizuki Y."/>
            <person name="Nakayama S."/>
            <person name="Nakazaki N."/>
            <person name="Shimpo S."/>
            <person name="Sugimoto M."/>
            <person name="Takeuchi C."/>
            <person name="Yamada M."/>
            <person name="Tabata S."/>
        </authorList>
    </citation>
    <scope>NUCLEOTIDE SEQUENCE [LARGE SCALE GENOMIC DNA]</scope>
    <source>
        <strain>LMG 29417 / CECT 9101 / MAFF 303099</strain>
    </source>
</reference>
<reference key="2">
    <citation type="journal article" date="2006" name="J. Bacteriol.">
        <title>Evolution of vitamin B2 biosynthesis: 6,7-dimethyl-8-ribityllumazine synthases of Brucella.</title>
        <authorList>
            <person name="Zylberman V."/>
            <person name="Klinke S."/>
            <person name="Haase I."/>
            <person name="Bacher A."/>
            <person name="Fischer M."/>
            <person name="Goldbaum F.A."/>
        </authorList>
    </citation>
    <scope>GENE NAME</scope>
</reference>
<reference key="3">
    <citation type="journal article" date="2007" name="J. Mol. Biol.">
        <title>Structural and kinetic properties of lumazine synthase isoenzymes in the order Rhizobiales.</title>
        <authorList>
            <person name="Klinke S."/>
            <person name="Zylberman V."/>
            <person name="Bonomi H.R."/>
            <person name="Haase I."/>
            <person name="Guimaraes B.G."/>
            <person name="Braden B.C."/>
            <person name="Bacher A."/>
            <person name="Fischer M."/>
            <person name="Goldbaum F.A."/>
        </authorList>
    </citation>
    <scope>X-RAY CRYSTALLOGRAPHY (2.53 ANGSTROMS) IN COMPLEX WITH SUBSTRATE ANALOG INHIBITOR AND PHOSPHATE</scope>
    <scope>FUNCTION</scope>
    <scope>CATALYTIC ACTIVITY</scope>
    <scope>KINETIC PARAMETERS</scope>
    <scope>SUBUNIT</scope>
</reference>
<keyword id="KW-0002">3D-structure</keyword>
<keyword id="KW-0686">Riboflavin biosynthesis</keyword>
<keyword id="KW-0808">Transferase</keyword>